<evidence type="ECO:0000255" key="1">
    <source>
        <dbReference type="HAMAP-Rule" id="MF_00628"/>
    </source>
</evidence>
<evidence type="ECO:0000305" key="2"/>
<protein>
    <recommendedName>
        <fullName evidence="1">Peptidyl-tRNA hydrolase</fullName>
        <shortName evidence="1">PTH</shortName>
        <ecNumber evidence="1">3.1.1.29</ecNumber>
    </recommendedName>
</protein>
<comment type="function">
    <text evidence="1">The natural substrate for this enzyme may be peptidyl-tRNAs which drop off the ribosome during protein synthesis.</text>
</comment>
<comment type="catalytic activity">
    <reaction evidence="1">
        <text>an N-acyl-L-alpha-aminoacyl-tRNA + H2O = an N-acyl-L-amino acid + a tRNA + H(+)</text>
        <dbReference type="Rhea" id="RHEA:54448"/>
        <dbReference type="Rhea" id="RHEA-COMP:10123"/>
        <dbReference type="Rhea" id="RHEA-COMP:13883"/>
        <dbReference type="ChEBI" id="CHEBI:15377"/>
        <dbReference type="ChEBI" id="CHEBI:15378"/>
        <dbReference type="ChEBI" id="CHEBI:59874"/>
        <dbReference type="ChEBI" id="CHEBI:78442"/>
        <dbReference type="ChEBI" id="CHEBI:138191"/>
        <dbReference type="EC" id="3.1.1.29"/>
    </reaction>
</comment>
<comment type="subcellular location">
    <subcellularLocation>
        <location evidence="1">Cytoplasm</location>
    </subcellularLocation>
</comment>
<comment type="similarity">
    <text evidence="1">Belongs to the PTH2 family.</text>
</comment>
<comment type="sequence caution" evidence="2">
    <conflict type="erroneous initiation">
        <sequence resource="EMBL-CDS" id="AAM29808"/>
    </conflict>
</comment>
<reference key="1">
    <citation type="journal article" date="2002" name="J. Mol. Microbiol. Biotechnol.">
        <title>The genome of Methanosarcina mazei: evidence for lateral gene transfer between Bacteria and Archaea.</title>
        <authorList>
            <person name="Deppenmeier U."/>
            <person name="Johann A."/>
            <person name="Hartsch T."/>
            <person name="Merkl R."/>
            <person name="Schmitz R.A."/>
            <person name="Martinez-Arias R."/>
            <person name="Henne A."/>
            <person name="Wiezer A."/>
            <person name="Baeumer S."/>
            <person name="Jacobi C."/>
            <person name="Brueggemann H."/>
            <person name="Lienard T."/>
            <person name="Christmann A."/>
            <person name="Boemecke M."/>
            <person name="Steckel S."/>
            <person name="Bhattacharyya A."/>
            <person name="Lykidis A."/>
            <person name="Overbeek R."/>
            <person name="Klenk H.-P."/>
            <person name="Gunsalus R.P."/>
            <person name="Fritz H.-J."/>
            <person name="Gottschalk G."/>
        </authorList>
    </citation>
    <scope>NUCLEOTIDE SEQUENCE [LARGE SCALE GENOMIC DNA]</scope>
    <source>
        <strain>ATCC BAA-159 / DSM 3647 / Goe1 / Go1 / JCM 11833 / OCM 88</strain>
    </source>
</reference>
<proteinExistence type="inferred from homology"/>
<dbReference type="EC" id="3.1.1.29" evidence="1"/>
<dbReference type="EMBL" id="AE008384">
    <property type="protein sequence ID" value="AAM29808.1"/>
    <property type="status" value="ALT_INIT"/>
    <property type="molecule type" value="Genomic_DNA"/>
</dbReference>
<dbReference type="SMR" id="Q8Q0M4"/>
<dbReference type="KEGG" id="mma:MM_0112"/>
<dbReference type="PATRIC" id="fig|192952.21.peg.125"/>
<dbReference type="eggNOG" id="arCOG04228">
    <property type="taxonomic scope" value="Archaea"/>
</dbReference>
<dbReference type="HOGENOM" id="CLU_073661_2_2_2"/>
<dbReference type="Proteomes" id="UP000000595">
    <property type="component" value="Chromosome"/>
</dbReference>
<dbReference type="GO" id="GO:0005829">
    <property type="term" value="C:cytosol"/>
    <property type="evidence" value="ECO:0007669"/>
    <property type="project" value="TreeGrafter"/>
</dbReference>
<dbReference type="GO" id="GO:0004045">
    <property type="term" value="F:peptidyl-tRNA hydrolase activity"/>
    <property type="evidence" value="ECO:0007669"/>
    <property type="project" value="UniProtKB-UniRule"/>
</dbReference>
<dbReference type="GO" id="GO:0006412">
    <property type="term" value="P:translation"/>
    <property type="evidence" value="ECO:0007669"/>
    <property type="project" value="UniProtKB-UniRule"/>
</dbReference>
<dbReference type="CDD" id="cd02430">
    <property type="entry name" value="PTH2"/>
    <property type="match status" value="1"/>
</dbReference>
<dbReference type="FunFam" id="3.40.1490.10:FF:000001">
    <property type="entry name" value="Peptidyl-tRNA hydrolase 2"/>
    <property type="match status" value="1"/>
</dbReference>
<dbReference type="Gene3D" id="3.40.1490.10">
    <property type="entry name" value="Bit1"/>
    <property type="match status" value="1"/>
</dbReference>
<dbReference type="HAMAP" id="MF_00628">
    <property type="entry name" value="Pept_tRNA_hydro_arch"/>
    <property type="match status" value="1"/>
</dbReference>
<dbReference type="InterPro" id="IPR023476">
    <property type="entry name" value="Pep_tRNA_hydro_II_dom_sf"/>
</dbReference>
<dbReference type="InterPro" id="IPR034759">
    <property type="entry name" value="Pept_tRNA_hydro_arch"/>
</dbReference>
<dbReference type="InterPro" id="IPR002833">
    <property type="entry name" value="PTH2"/>
</dbReference>
<dbReference type="NCBIfam" id="TIGR00283">
    <property type="entry name" value="arch_pth2"/>
    <property type="match status" value="1"/>
</dbReference>
<dbReference type="NCBIfam" id="NF003314">
    <property type="entry name" value="PRK04322.1"/>
    <property type="match status" value="1"/>
</dbReference>
<dbReference type="PANTHER" id="PTHR12649">
    <property type="entry name" value="PEPTIDYL-TRNA HYDROLASE 2"/>
    <property type="match status" value="1"/>
</dbReference>
<dbReference type="PANTHER" id="PTHR12649:SF11">
    <property type="entry name" value="PEPTIDYL-TRNA HYDROLASE 2, MITOCHONDRIAL"/>
    <property type="match status" value="1"/>
</dbReference>
<dbReference type="Pfam" id="PF01981">
    <property type="entry name" value="PTH2"/>
    <property type="match status" value="1"/>
</dbReference>
<dbReference type="SUPFAM" id="SSF102462">
    <property type="entry name" value="Peptidyl-tRNA hydrolase II"/>
    <property type="match status" value="1"/>
</dbReference>
<name>PTH_METMA</name>
<keyword id="KW-0963">Cytoplasm</keyword>
<keyword id="KW-0378">Hydrolase</keyword>
<sequence>MSEYKQCIVTRDDLKLSKGKFAVQVAHAALSAAEWASKGDLEKWKEGGQKKIVLKVPSIKELYELKEKARREGLPTALIQDAGLTEIPPGTVTVLGIGPAKEELIDKITKDLKLV</sequence>
<gene>
    <name evidence="1" type="primary">pth</name>
    <name type="ordered locus">MM_0112</name>
</gene>
<organism>
    <name type="scientific">Methanosarcina mazei (strain ATCC BAA-159 / DSM 3647 / Goe1 / Go1 / JCM 11833 / OCM 88)</name>
    <name type="common">Methanosarcina frisia</name>
    <dbReference type="NCBI Taxonomy" id="192952"/>
    <lineage>
        <taxon>Archaea</taxon>
        <taxon>Methanobacteriati</taxon>
        <taxon>Methanobacteriota</taxon>
        <taxon>Stenosarchaea group</taxon>
        <taxon>Methanomicrobia</taxon>
        <taxon>Methanosarcinales</taxon>
        <taxon>Methanosarcinaceae</taxon>
        <taxon>Methanosarcina</taxon>
    </lineage>
</organism>
<feature type="chain" id="PRO_0000120294" description="Peptidyl-tRNA hydrolase">
    <location>
        <begin position="1"/>
        <end position="115"/>
    </location>
</feature>
<accession>Q8Q0M4</accession>